<accession>A1D9R4</accession>
<dbReference type="EMBL" id="DS027693">
    <property type="protein sequence ID" value="EAW20545.1"/>
    <property type="molecule type" value="Genomic_DNA"/>
</dbReference>
<dbReference type="RefSeq" id="XP_001262442.1">
    <property type="nucleotide sequence ID" value="XM_001262441.1"/>
</dbReference>
<dbReference type="SMR" id="A1D9R4"/>
<dbReference type="STRING" id="331117.A1D9R4"/>
<dbReference type="EnsemblFungi" id="EAW20545">
    <property type="protein sequence ID" value="EAW20545"/>
    <property type="gene ID" value="NFIA_029770"/>
</dbReference>
<dbReference type="GeneID" id="4589019"/>
<dbReference type="KEGG" id="nfi:NFIA_029770"/>
<dbReference type="VEuPathDB" id="FungiDB:NFIA_029770"/>
<dbReference type="eggNOG" id="ENOG502S6EF">
    <property type="taxonomic scope" value="Eukaryota"/>
</dbReference>
<dbReference type="HOGENOM" id="CLU_147114_2_0_1"/>
<dbReference type="OMA" id="KYKLRIH"/>
<dbReference type="OrthoDB" id="529194at2759"/>
<dbReference type="Proteomes" id="UP000006702">
    <property type="component" value="Unassembled WGS sequence"/>
</dbReference>
<dbReference type="GO" id="GO:0005759">
    <property type="term" value="C:mitochondrial matrix"/>
    <property type="evidence" value="ECO:0007669"/>
    <property type="project" value="UniProtKB-SubCell"/>
</dbReference>
<dbReference type="GO" id="GO:0044183">
    <property type="term" value="F:protein folding chaperone"/>
    <property type="evidence" value="ECO:0007669"/>
    <property type="project" value="TreeGrafter"/>
</dbReference>
<dbReference type="GO" id="GO:0034551">
    <property type="term" value="P:mitochondrial respiratory chain complex III assembly"/>
    <property type="evidence" value="ECO:0007669"/>
    <property type="project" value="InterPro"/>
</dbReference>
<dbReference type="CDD" id="cd20267">
    <property type="entry name" value="Complex1_LYR_LYRM7"/>
    <property type="match status" value="1"/>
</dbReference>
<dbReference type="InterPro" id="IPR045298">
    <property type="entry name" value="Complex1_LYR_LYRM7"/>
</dbReference>
<dbReference type="InterPro" id="IPR050435">
    <property type="entry name" value="MZM1/LYRM7"/>
</dbReference>
<dbReference type="PANTHER" id="PTHR46749">
    <property type="entry name" value="COMPLEX III ASSEMBLY FACTOR LYRM7"/>
    <property type="match status" value="1"/>
</dbReference>
<dbReference type="PANTHER" id="PTHR46749:SF1">
    <property type="entry name" value="COMPLEX III ASSEMBLY FACTOR LYRM7"/>
    <property type="match status" value="1"/>
</dbReference>
<evidence type="ECO:0000250" key="1"/>
<evidence type="ECO:0000255" key="2"/>
<evidence type="ECO:0000256" key="3">
    <source>
        <dbReference type="SAM" id="MobiDB-lite"/>
    </source>
</evidence>
<evidence type="ECO:0000305" key="4"/>
<comment type="function">
    <text evidence="1">Assembly factor required for Rieske Fe-S protein RIP1 incorporation into the cytochrome b-c1 (CIII) complex. Functions as a chaperone, binding to this subunit within the mitochondrial matrix and stabilizing it prior to its translocation and insertion into the late CIII dimeric intermediate within the mitochondrial inner membrane. Modulates the mitochondrial matrix zinc pool (By similarity).</text>
</comment>
<comment type="subunit">
    <text evidence="1">Interacts with RIP1.</text>
</comment>
<comment type="subcellular location">
    <subcellularLocation>
        <location evidence="1">Mitochondrion matrix</location>
    </subcellularLocation>
</comment>
<comment type="similarity">
    <text evidence="4">Belongs to the complex I LYR family. MZM1 subfamily.</text>
</comment>
<keyword id="KW-0143">Chaperone</keyword>
<keyword id="KW-0496">Mitochondrion</keyword>
<keyword id="KW-1185">Reference proteome</keyword>
<keyword id="KW-0809">Transit peptide</keyword>
<protein>
    <recommendedName>
        <fullName>Mitochondrial zinc maintenance protein 1, mitochondrial</fullName>
    </recommendedName>
</protein>
<name>MZM1_NEOFI</name>
<reference key="1">
    <citation type="journal article" date="2008" name="PLoS Genet.">
        <title>Genomic islands in the pathogenic filamentous fungus Aspergillus fumigatus.</title>
        <authorList>
            <person name="Fedorova N.D."/>
            <person name="Khaldi N."/>
            <person name="Joardar V.S."/>
            <person name="Maiti R."/>
            <person name="Amedeo P."/>
            <person name="Anderson M.J."/>
            <person name="Crabtree J."/>
            <person name="Silva J.C."/>
            <person name="Badger J.H."/>
            <person name="Albarraq A."/>
            <person name="Angiuoli S."/>
            <person name="Bussey H."/>
            <person name="Bowyer P."/>
            <person name="Cotty P.J."/>
            <person name="Dyer P.S."/>
            <person name="Egan A."/>
            <person name="Galens K."/>
            <person name="Fraser-Liggett C.M."/>
            <person name="Haas B.J."/>
            <person name="Inman J.M."/>
            <person name="Kent R."/>
            <person name="Lemieux S."/>
            <person name="Malavazi I."/>
            <person name="Orvis J."/>
            <person name="Roemer T."/>
            <person name="Ronning C.M."/>
            <person name="Sundaram J.P."/>
            <person name="Sutton G."/>
            <person name="Turner G."/>
            <person name="Venter J.C."/>
            <person name="White O.R."/>
            <person name="Whitty B.R."/>
            <person name="Youngman P."/>
            <person name="Wolfe K.H."/>
            <person name="Goldman G.H."/>
            <person name="Wortman J.R."/>
            <person name="Jiang B."/>
            <person name="Denning D.W."/>
            <person name="Nierman W.C."/>
        </authorList>
    </citation>
    <scope>NUCLEOTIDE SEQUENCE [LARGE SCALE GENOMIC DNA]</scope>
    <source>
        <strain>ATCC 1020 / DSM 3700 / CBS 544.65 / FGSC A1164 / JCM 1740 / NRRL 181 / WB 181</strain>
    </source>
</reference>
<organism>
    <name type="scientific">Neosartorya fischeri (strain ATCC 1020 / DSM 3700 / CBS 544.65 / FGSC A1164 / JCM 1740 / NRRL 181 / WB 181)</name>
    <name type="common">Aspergillus fischerianus</name>
    <dbReference type="NCBI Taxonomy" id="331117"/>
    <lineage>
        <taxon>Eukaryota</taxon>
        <taxon>Fungi</taxon>
        <taxon>Dikarya</taxon>
        <taxon>Ascomycota</taxon>
        <taxon>Pezizomycotina</taxon>
        <taxon>Eurotiomycetes</taxon>
        <taxon>Eurotiomycetidae</taxon>
        <taxon>Eurotiales</taxon>
        <taxon>Aspergillaceae</taxon>
        <taxon>Aspergillus</taxon>
        <taxon>Aspergillus subgen. Fumigati</taxon>
    </lineage>
</organism>
<sequence>MASQTAVSARSAYRQILRATRIAFQDDFRVLVAARQEARRQFDEHRREGIDTPMQINHAKEVATILRHNIVQGVRDSKDENAKWELRIHDDIERGDNDSIRVGGKKVKVDKPCSA</sequence>
<feature type="transit peptide" description="Mitochondrion" evidence="2">
    <location>
        <begin position="1"/>
        <end position="36"/>
    </location>
</feature>
<feature type="chain" id="PRO_0000405500" description="Mitochondrial zinc maintenance protein 1, mitochondrial">
    <location>
        <begin position="37"/>
        <end position="115"/>
    </location>
</feature>
<feature type="region of interest" description="Disordered" evidence="3">
    <location>
        <begin position="95"/>
        <end position="115"/>
    </location>
</feature>
<gene>
    <name type="primary">MZM1</name>
    <name type="ORF">NFIA_029770</name>
</gene>
<proteinExistence type="inferred from homology"/>